<organism>
    <name type="scientific">Bacillus cereus (strain Q1)</name>
    <dbReference type="NCBI Taxonomy" id="361100"/>
    <lineage>
        <taxon>Bacteria</taxon>
        <taxon>Bacillati</taxon>
        <taxon>Bacillota</taxon>
        <taxon>Bacilli</taxon>
        <taxon>Bacillales</taxon>
        <taxon>Bacillaceae</taxon>
        <taxon>Bacillus</taxon>
        <taxon>Bacillus cereus group</taxon>
    </lineage>
</organism>
<reference key="1">
    <citation type="journal article" date="2009" name="J. Bacteriol.">
        <title>Complete genome sequence of the extremophilic Bacillus cereus strain Q1 with industrial applications.</title>
        <authorList>
            <person name="Xiong Z."/>
            <person name="Jiang Y."/>
            <person name="Qi D."/>
            <person name="Lu H."/>
            <person name="Yang F."/>
            <person name="Yang J."/>
            <person name="Chen L."/>
            <person name="Sun L."/>
            <person name="Xu X."/>
            <person name="Xue Y."/>
            <person name="Zhu Y."/>
            <person name="Jin Q."/>
        </authorList>
    </citation>
    <scope>NUCLEOTIDE SEQUENCE [LARGE SCALE GENOMIC DNA]</scope>
    <source>
        <strain>Q1</strain>
    </source>
</reference>
<gene>
    <name evidence="1" type="primary">ybeY</name>
    <name type="ordered locus">BCQ_4089</name>
</gene>
<name>YBEY_BACCQ</name>
<feature type="chain" id="PRO_1000199953" description="Endoribonuclease YbeY">
    <location>
        <begin position="1"/>
        <end position="156"/>
    </location>
</feature>
<feature type="binding site" evidence="1">
    <location>
        <position position="122"/>
    </location>
    <ligand>
        <name>Zn(2+)</name>
        <dbReference type="ChEBI" id="CHEBI:29105"/>
        <note>catalytic</note>
    </ligand>
</feature>
<feature type="binding site" evidence="1">
    <location>
        <position position="126"/>
    </location>
    <ligand>
        <name>Zn(2+)</name>
        <dbReference type="ChEBI" id="CHEBI:29105"/>
        <note>catalytic</note>
    </ligand>
</feature>
<feature type="binding site" evidence="1">
    <location>
        <position position="132"/>
    </location>
    <ligand>
        <name>Zn(2+)</name>
        <dbReference type="ChEBI" id="CHEBI:29105"/>
        <note>catalytic</note>
    </ligand>
</feature>
<dbReference type="EC" id="3.1.-.-" evidence="1"/>
<dbReference type="EMBL" id="CP000227">
    <property type="protein sequence ID" value="ACM14516.1"/>
    <property type="molecule type" value="Genomic_DNA"/>
</dbReference>
<dbReference type="SMR" id="B9IY70"/>
<dbReference type="KEGG" id="bcq:BCQ_4089"/>
<dbReference type="HOGENOM" id="CLU_106710_3_0_9"/>
<dbReference type="Proteomes" id="UP000000441">
    <property type="component" value="Chromosome"/>
</dbReference>
<dbReference type="GO" id="GO:0005737">
    <property type="term" value="C:cytoplasm"/>
    <property type="evidence" value="ECO:0007669"/>
    <property type="project" value="UniProtKB-SubCell"/>
</dbReference>
<dbReference type="GO" id="GO:0004222">
    <property type="term" value="F:metalloendopeptidase activity"/>
    <property type="evidence" value="ECO:0007669"/>
    <property type="project" value="InterPro"/>
</dbReference>
<dbReference type="GO" id="GO:0004521">
    <property type="term" value="F:RNA endonuclease activity"/>
    <property type="evidence" value="ECO:0007669"/>
    <property type="project" value="UniProtKB-UniRule"/>
</dbReference>
<dbReference type="GO" id="GO:0008270">
    <property type="term" value="F:zinc ion binding"/>
    <property type="evidence" value="ECO:0007669"/>
    <property type="project" value="UniProtKB-UniRule"/>
</dbReference>
<dbReference type="GO" id="GO:0006364">
    <property type="term" value="P:rRNA processing"/>
    <property type="evidence" value="ECO:0007669"/>
    <property type="project" value="UniProtKB-UniRule"/>
</dbReference>
<dbReference type="Gene3D" id="3.40.390.30">
    <property type="entry name" value="Metalloproteases ('zincins'), catalytic domain"/>
    <property type="match status" value="1"/>
</dbReference>
<dbReference type="HAMAP" id="MF_00009">
    <property type="entry name" value="Endoribonucl_YbeY"/>
    <property type="match status" value="1"/>
</dbReference>
<dbReference type="InterPro" id="IPR023091">
    <property type="entry name" value="MetalPrtase_cat_dom_sf_prd"/>
</dbReference>
<dbReference type="InterPro" id="IPR002036">
    <property type="entry name" value="YbeY"/>
</dbReference>
<dbReference type="InterPro" id="IPR020549">
    <property type="entry name" value="YbeY_CS"/>
</dbReference>
<dbReference type="NCBIfam" id="TIGR00043">
    <property type="entry name" value="rRNA maturation RNase YbeY"/>
    <property type="match status" value="1"/>
</dbReference>
<dbReference type="PANTHER" id="PTHR46986">
    <property type="entry name" value="ENDORIBONUCLEASE YBEY, CHLOROPLASTIC"/>
    <property type="match status" value="1"/>
</dbReference>
<dbReference type="PANTHER" id="PTHR46986:SF1">
    <property type="entry name" value="ENDORIBONUCLEASE YBEY, CHLOROPLASTIC"/>
    <property type="match status" value="1"/>
</dbReference>
<dbReference type="Pfam" id="PF02130">
    <property type="entry name" value="YbeY"/>
    <property type="match status" value="1"/>
</dbReference>
<dbReference type="SUPFAM" id="SSF55486">
    <property type="entry name" value="Metalloproteases ('zincins'), catalytic domain"/>
    <property type="match status" value="1"/>
</dbReference>
<dbReference type="PROSITE" id="PS01306">
    <property type="entry name" value="UPF0054"/>
    <property type="match status" value="1"/>
</dbReference>
<keyword id="KW-0963">Cytoplasm</keyword>
<keyword id="KW-0255">Endonuclease</keyword>
<keyword id="KW-0378">Hydrolase</keyword>
<keyword id="KW-0479">Metal-binding</keyword>
<keyword id="KW-0540">Nuclease</keyword>
<keyword id="KW-0690">Ribosome biogenesis</keyword>
<keyword id="KW-0698">rRNA processing</keyword>
<keyword id="KW-0862">Zinc</keyword>
<evidence type="ECO:0000255" key="1">
    <source>
        <dbReference type="HAMAP-Rule" id="MF_00009"/>
    </source>
</evidence>
<protein>
    <recommendedName>
        <fullName evidence="1">Endoribonuclease YbeY</fullName>
        <ecNumber evidence="1">3.1.-.-</ecNumber>
    </recommendedName>
</protein>
<proteinExistence type="inferred from homology"/>
<accession>B9IY70</accession>
<comment type="function">
    <text evidence="1">Single strand-specific metallo-endoribonuclease involved in late-stage 70S ribosome quality control and in maturation of the 3' terminus of the 16S rRNA.</text>
</comment>
<comment type="cofactor">
    <cofactor evidence="1">
        <name>Zn(2+)</name>
        <dbReference type="ChEBI" id="CHEBI:29105"/>
    </cofactor>
    <text evidence="1">Binds 1 zinc ion.</text>
</comment>
<comment type="subcellular location">
    <subcellularLocation>
        <location evidence="1">Cytoplasm</location>
    </subcellularLocation>
</comment>
<comment type="similarity">
    <text evidence="1">Belongs to the endoribonuclease YbeY family.</text>
</comment>
<sequence>MSLLIDFIDETEEVKEEYVNLIREILGKAAQMEKIEDGAELSVTFVDNERIREINRDYRDKDQPTDVISFAMEEMGEGEMEIVGVEMPRMLGDLIISIPRAKEQAEEYGHSFDRELGFLALHGFLHLLGYDHMTEEDEKEMFGRQKEILEAFGLGR</sequence>